<proteinExistence type="evidence at protein level"/>
<gene>
    <name evidence="12" type="primary">POLR1H</name>
    <name evidence="8" type="synonym">RPA12</name>
    <name evidence="7" type="synonym">ZNRD1</name>
</gene>
<name>RPA12_HUMAN</name>
<protein>
    <recommendedName>
        <fullName evidence="11">DNA-directed RNA polymerase I subunit RPA12</fullName>
    </recommendedName>
    <alternativeName>
        <fullName evidence="12">DNA-directed RNA polymerase I subunit H</fullName>
    </alternativeName>
    <alternativeName>
        <fullName evidence="7">Zinc ribbon domain-containing protein 1</fullName>
    </alternativeName>
</protein>
<reference key="1">
    <citation type="journal article" date="2000" name="Genomics">
        <title>A new zinc ribbon gene (ZNRD1) is cloned from the human MHC class I region.</title>
        <authorList>
            <person name="Fan W."/>
            <person name="Wang Z."/>
            <person name="Kyzysztof F."/>
            <person name="Prange C."/>
            <person name="Lennon G."/>
        </authorList>
    </citation>
    <scope>NUCLEOTIDE SEQUENCE [MRNA]</scope>
</reference>
<reference key="2">
    <citation type="submission" date="2000-02" db="EMBL/GenBank/DDBJ databases">
        <title>Complementation studies of Rpa12, small specific subunit of nuclear RNA polymerase I.</title>
        <authorList>
            <person name="Shematorova E.K."/>
            <person name="Lebedenko E.N."/>
            <person name="Shpakovski G.V."/>
        </authorList>
    </citation>
    <scope>NUCLEOTIDE SEQUENCE [GENOMIC DNA / MRNA]</scope>
</reference>
<reference key="3">
    <citation type="submission" date="2004-06" db="EMBL/GenBank/DDBJ databases">
        <title>Cloning of human full open reading frames in Gateway(TM) system entry vector (pDONR201).</title>
        <authorList>
            <person name="Ebert L."/>
            <person name="Schick M."/>
            <person name="Neubert P."/>
            <person name="Schatten R."/>
            <person name="Henze S."/>
            <person name="Korn B."/>
        </authorList>
    </citation>
    <scope>NUCLEOTIDE SEQUENCE [LARGE SCALE MRNA]</scope>
</reference>
<reference key="4">
    <citation type="journal article" date="2003" name="Nature">
        <title>The DNA sequence and analysis of human chromosome 6.</title>
        <authorList>
            <person name="Mungall A.J."/>
            <person name="Palmer S.A."/>
            <person name="Sims S.K."/>
            <person name="Edwards C.A."/>
            <person name="Ashurst J.L."/>
            <person name="Wilming L."/>
            <person name="Jones M.C."/>
            <person name="Horton R."/>
            <person name="Hunt S.E."/>
            <person name="Scott C.E."/>
            <person name="Gilbert J.G.R."/>
            <person name="Clamp M.E."/>
            <person name="Bethel G."/>
            <person name="Milne S."/>
            <person name="Ainscough R."/>
            <person name="Almeida J.P."/>
            <person name="Ambrose K.D."/>
            <person name="Andrews T.D."/>
            <person name="Ashwell R.I.S."/>
            <person name="Babbage A.K."/>
            <person name="Bagguley C.L."/>
            <person name="Bailey J."/>
            <person name="Banerjee R."/>
            <person name="Barker D.J."/>
            <person name="Barlow K.F."/>
            <person name="Bates K."/>
            <person name="Beare D.M."/>
            <person name="Beasley H."/>
            <person name="Beasley O."/>
            <person name="Bird C.P."/>
            <person name="Blakey S.E."/>
            <person name="Bray-Allen S."/>
            <person name="Brook J."/>
            <person name="Brown A.J."/>
            <person name="Brown J.Y."/>
            <person name="Burford D.C."/>
            <person name="Burrill W."/>
            <person name="Burton J."/>
            <person name="Carder C."/>
            <person name="Carter N.P."/>
            <person name="Chapman J.C."/>
            <person name="Clark S.Y."/>
            <person name="Clark G."/>
            <person name="Clee C.M."/>
            <person name="Clegg S."/>
            <person name="Cobley V."/>
            <person name="Collier R.E."/>
            <person name="Collins J.E."/>
            <person name="Colman L.K."/>
            <person name="Corby N.R."/>
            <person name="Coville G.J."/>
            <person name="Culley K.M."/>
            <person name="Dhami P."/>
            <person name="Davies J."/>
            <person name="Dunn M."/>
            <person name="Earthrowl M.E."/>
            <person name="Ellington A.E."/>
            <person name="Evans K.A."/>
            <person name="Faulkner L."/>
            <person name="Francis M.D."/>
            <person name="Frankish A."/>
            <person name="Frankland J."/>
            <person name="French L."/>
            <person name="Garner P."/>
            <person name="Garnett J."/>
            <person name="Ghori M.J."/>
            <person name="Gilby L.M."/>
            <person name="Gillson C.J."/>
            <person name="Glithero R.J."/>
            <person name="Grafham D.V."/>
            <person name="Grant M."/>
            <person name="Gribble S."/>
            <person name="Griffiths C."/>
            <person name="Griffiths M.N.D."/>
            <person name="Hall R."/>
            <person name="Halls K.S."/>
            <person name="Hammond S."/>
            <person name="Harley J.L."/>
            <person name="Hart E.A."/>
            <person name="Heath P.D."/>
            <person name="Heathcott R."/>
            <person name="Holmes S.J."/>
            <person name="Howden P.J."/>
            <person name="Howe K.L."/>
            <person name="Howell G.R."/>
            <person name="Huckle E."/>
            <person name="Humphray S.J."/>
            <person name="Humphries M.D."/>
            <person name="Hunt A.R."/>
            <person name="Johnson C.M."/>
            <person name="Joy A.A."/>
            <person name="Kay M."/>
            <person name="Keenan S.J."/>
            <person name="Kimberley A.M."/>
            <person name="King A."/>
            <person name="Laird G.K."/>
            <person name="Langford C."/>
            <person name="Lawlor S."/>
            <person name="Leongamornlert D.A."/>
            <person name="Leversha M."/>
            <person name="Lloyd C.R."/>
            <person name="Lloyd D.M."/>
            <person name="Loveland J.E."/>
            <person name="Lovell J."/>
            <person name="Martin S."/>
            <person name="Mashreghi-Mohammadi M."/>
            <person name="Maslen G.L."/>
            <person name="Matthews L."/>
            <person name="McCann O.T."/>
            <person name="McLaren S.J."/>
            <person name="McLay K."/>
            <person name="McMurray A."/>
            <person name="Moore M.J.F."/>
            <person name="Mullikin J.C."/>
            <person name="Niblett D."/>
            <person name="Nickerson T."/>
            <person name="Novik K.L."/>
            <person name="Oliver K."/>
            <person name="Overton-Larty E.K."/>
            <person name="Parker A."/>
            <person name="Patel R."/>
            <person name="Pearce A.V."/>
            <person name="Peck A.I."/>
            <person name="Phillimore B.J.C.T."/>
            <person name="Phillips S."/>
            <person name="Plumb R.W."/>
            <person name="Porter K.M."/>
            <person name="Ramsey Y."/>
            <person name="Ranby S.A."/>
            <person name="Rice C.M."/>
            <person name="Ross M.T."/>
            <person name="Searle S.M."/>
            <person name="Sehra H.K."/>
            <person name="Sheridan E."/>
            <person name="Skuce C.D."/>
            <person name="Smith S."/>
            <person name="Smith M."/>
            <person name="Spraggon L."/>
            <person name="Squares S.L."/>
            <person name="Steward C.A."/>
            <person name="Sycamore N."/>
            <person name="Tamlyn-Hall G."/>
            <person name="Tester J."/>
            <person name="Theaker A.J."/>
            <person name="Thomas D.W."/>
            <person name="Thorpe A."/>
            <person name="Tracey A."/>
            <person name="Tromans A."/>
            <person name="Tubby B."/>
            <person name="Wall M."/>
            <person name="Wallis J.M."/>
            <person name="West A.P."/>
            <person name="White S.S."/>
            <person name="Whitehead S.L."/>
            <person name="Whittaker H."/>
            <person name="Wild A."/>
            <person name="Willey D.J."/>
            <person name="Wilmer T.E."/>
            <person name="Wood J.M."/>
            <person name="Wray P.W."/>
            <person name="Wyatt J.C."/>
            <person name="Young L."/>
            <person name="Younger R.M."/>
            <person name="Bentley D.R."/>
            <person name="Coulson A."/>
            <person name="Durbin R.M."/>
            <person name="Hubbard T."/>
            <person name="Sulston J.E."/>
            <person name="Dunham I."/>
            <person name="Rogers J."/>
            <person name="Beck S."/>
        </authorList>
    </citation>
    <scope>NUCLEOTIDE SEQUENCE [LARGE SCALE GENOMIC DNA]</scope>
</reference>
<reference key="5">
    <citation type="journal article" date="2004" name="Genome Res.">
        <title>The status, quality, and expansion of the NIH full-length cDNA project: the Mammalian Gene Collection (MGC).</title>
        <authorList>
            <consortium name="The MGC Project Team"/>
        </authorList>
    </citation>
    <scope>NUCLEOTIDE SEQUENCE [LARGE SCALE MRNA]</scope>
    <source>
        <tissue>Skeletal muscle</tissue>
        <tissue>Skin</tissue>
    </source>
</reference>
<reference key="6">
    <citation type="journal article" date="2021" name="Cell Discov.">
        <title>Structure of the human RNA polymerase I elongation complex.</title>
        <authorList>
            <person name="Zhao D."/>
            <person name="Liu W."/>
            <person name="Chen K."/>
            <person name="Wu Z."/>
            <person name="Yang H."/>
            <person name="Xu Y."/>
        </authorList>
    </citation>
    <scope>STRUCTURE BY ELECTRON MICROSCOPY (2.81 ANGSTROMS)</scope>
    <scope>FUNCTION OF POL I</scope>
    <scope>SUBUNIT</scope>
    <scope>DOMAIN</scope>
</reference>
<reference key="7">
    <citation type="journal article" date="2021" name="Nat. Struct. Mol. Biol.">
        <title>Cryo-EM structures of human RNA polymerase I.</title>
        <authorList>
            <person name="Misiaszek A.D."/>
            <person name="Girbig M."/>
            <person name="Grotsch H."/>
            <person name="Baudin F."/>
            <person name="Murciano B."/>
            <person name="Lafita A."/>
            <person name="Muller C.W."/>
        </authorList>
    </citation>
    <scope>STRUCTURE BY ELECTRON MICROSCOPY (2.70 ANGSTROMS) IN COMPLEX WITH ZN(2+)</scope>
    <scope>FUNCTION OF POL I</scope>
    <scope>SUBUNIT</scope>
    <scope>SUBCELLULAR LOCATION</scope>
</reference>
<reference key="8">
    <citation type="journal article" date="2022" name="Life. Sci Alliance">
        <title>The human RNA polymerase I structure reveals an HMG-like docking domain specific to metazoans.</title>
        <authorList>
            <person name="Daiss J.L."/>
            <person name="Pilsl M."/>
            <person name="Straub K."/>
            <person name="Bleckmann A."/>
            <person name="Hocherl M."/>
            <person name="Heiss F.B."/>
            <person name="Abascal-Palacios G."/>
            <person name="Ramsay E.P."/>
            <person name="Tluckova K."/>
            <person name="Mars J.C."/>
            <person name="Furtges T."/>
            <person name="Bruckmann A."/>
            <person name="Rudack T."/>
            <person name="Bernecky C."/>
            <person name="Lamour V."/>
            <person name="Panov K."/>
            <person name="Vannini A."/>
            <person name="Moss T."/>
            <person name="Engel C."/>
        </authorList>
    </citation>
    <scope>STRUCTURE BY ELECTRON MICROSCOPY (4.09 ANGSTROMS)</scope>
    <scope>FUNCTION OF POL I</scope>
    <scope>SUBUNIT</scope>
</reference>
<keyword id="KW-0002">3D-structure</keyword>
<keyword id="KW-0240">DNA-directed RNA polymerase</keyword>
<keyword id="KW-0479">Metal-binding</keyword>
<keyword id="KW-0539">Nucleus</keyword>
<keyword id="KW-1267">Proteomics identification</keyword>
<keyword id="KW-1185">Reference proteome</keyword>
<keyword id="KW-0804">Transcription</keyword>
<keyword id="KW-0862">Zinc</keyword>
<keyword id="KW-0863">Zinc-finger</keyword>
<evidence type="ECO:0000250" key="1">
    <source>
        <dbReference type="UniProtKB" id="Q9Y2Y1"/>
    </source>
</evidence>
<evidence type="ECO:0000255" key="2">
    <source>
        <dbReference type="PROSITE-ProRule" id="PRU00472"/>
    </source>
</evidence>
<evidence type="ECO:0000255" key="3">
    <source>
        <dbReference type="PROSITE-ProRule" id="PRU10145"/>
    </source>
</evidence>
<evidence type="ECO:0000269" key="4">
    <source>
    </source>
</evidence>
<evidence type="ECO:0000269" key="5">
    <source>
    </source>
</evidence>
<evidence type="ECO:0000269" key="6">
    <source>
    </source>
</evidence>
<evidence type="ECO:0000303" key="7">
    <source>
    </source>
</evidence>
<evidence type="ECO:0000303" key="8">
    <source ref="2"/>
</evidence>
<evidence type="ECO:0000305" key="9"/>
<evidence type="ECO:0000305" key="10">
    <source>
    </source>
</evidence>
<evidence type="ECO:0000305" key="11">
    <source ref="2"/>
</evidence>
<evidence type="ECO:0000312" key="12">
    <source>
        <dbReference type="HGNC" id="HGNC:13182"/>
    </source>
</evidence>
<evidence type="ECO:0007744" key="13">
    <source>
        <dbReference type="PDB" id="7OB9"/>
    </source>
</evidence>
<evidence type="ECO:0007829" key="14">
    <source>
        <dbReference type="PDB" id="7OB9"/>
    </source>
</evidence>
<evidence type="ECO:0007829" key="15">
    <source>
        <dbReference type="PDB" id="7OBA"/>
    </source>
</evidence>
<evidence type="ECO:0007829" key="16">
    <source>
        <dbReference type="PDB" id="7OBB"/>
    </source>
</evidence>
<feature type="chain" id="PRO_0000121460" description="DNA-directed RNA polymerase I subunit RPA12">
    <location>
        <begin position="1"/>
        <end position="126"/>
    </location>
</feature>
<feature type="zinc finger region" description="C4-type" evidence="5 13">
    <location>
        <begin position="20"/>
        <end position="41"/>
    </location>
</feature>
<feature type="zinc finger region" description="TFIIS-type" evidence="2">
    <location>
        <begin position="83"/>
        <end position="123"/>
    </location>
</feature>
<feature type="short sequence motif" description="Hairpin" evidence="1 4">
    <location>
        <begin position="106"/>
        <end position="107"/>
    </location>
</feature>
<feature type="binding site" evidence="3 5 13">
    <location>
        <position position="20"/>
    </location>
    <ligand>
        <name>Zn(2+)</name>
        <dbReference type="ChEBI" id="CHEBI:29105"/>
        <label>1</label>
    </ligand>
</feature>
<feature type="binding site" evidence="3 5 13">
    <location>
        <position position="23"/>
    </location>
    <ligand>
        <name>Zn(2+)</name>
        <dbReference type="ChEBI" id="CHEBI:29105"/>
        <label>1</label>
    </ligand>
</feature>
<feature type="binding site" evidence="3 5 13">
    <location>
        <position position="38"/>
    </location>
    <ligand>
        <name>Zn(2+)</name>
        <dbReference type="ChEBI" id="CHEBI:29105"/>
        <label>1</label>
    </ligand>
</feature>
<feature type="binding site" evidence="3 5 13">
    <location>
        <position position="41"/>
    </location>
    <ligand>
        <name>Zn(2+)</name>
        <dbReference type="ChEBI" id="CHEBI:29105"/>
        <label>1</label>
    </ligand>
</feature>
<feature type="binding site" evidence="2">
    <location>
        <position position="87"/>
    </location>
    <ligand>
        <name>Zn(2+)</name>
        <dbReference type="ChEBI" id="CHEBI:29105"/>
        <label>2</label>
    </ligand>
</feature>
<feature type="binding site" evidence="2">
    <location>
        <position position="90"/>
    </location>
    <ligand>
        <name>Zn(2+)</name>
        <dbReference type="ChEBI" id="CHEBI:29105"/>
        <label>2</label>
    </ligand>
</feature>
<feature type="binding site" evidence="2">
    <location>
        <position position="115"/>
    </location>
    <ligand>
        <name>Zn(2+)</name>
        <dbReference type="ChEBI" id="CHEBI:29105"/>
        <label>2</label>
    </ligand>
</feature>
<feature type="binding site" evidence="2">
    <location>
        <position position="118"/>
    </location>
    <ligand>
        <name>Zn(2+)</name>
        <dbReference type="ChEBI" id="CHEBI:29105"/>
        <label>2</label>
    </ligand>
</feature>
<feature type="sequence variant" id="VAR_052287" description="In dbSNP:rs17187658.">
    <original>Q</original>
    <variation>H</variation>
    <location>
        <position position="14"/>
    </location>
</feature>
<feature type="strand" evidence="16">
    <location>
        <begin position="12"/>
        <end position="14"/>
    </location>
</feature>
<feature type="turn" evidence="14">
    <location>
        <begin position="21"/>
        <end position="23"/>
    </location>
</feature>
<feature type="strand" evidence="14">
    <location>
        <begin position="32"/>
        <end position="37"/>
    </location>
</feature>
<feature type="turn" evidence="14">
    <location>
        <begin position="39"/>
        <end position="41"/>
    </location>
</feature>
<feature type="strand" evidence="14">
    <location>
        <begin position="44"/>
        <end position="46"/>
    </location>
</feature>
<feature type="helix" evidence="14">
    <location>
        <begin position="47"/>
        <end position="52"/>
    </location>
</feature>
<feature type="strand" evidence="14">
    <location>
        <begin position="57"/>
        <end position="62"/>
    </location>
</feature>
<feature type="strand" evidence="15">
    <location>
        <begin position="88"/>
        <end position="90"/>
    </location>
</feature>
<feature type="strand" evidence="15">
    <location>
        <begin position="95"/>
        <end position="99"/>
    </location>
</feature>
<feature type="strand" evidence="16">
    <location>
        <begin position="105"/>
        <end position="107"/>
    </location>
</feature>
<feature type="strand" evidence="15">
    <location>
        <begin position="111"/>
        <end position="118"/>
    </location>
</feature>
<feature type="strand" evidence="15">
    <location>
        <begin position="121"/>
        <end position="124"/>
    </location>
</feature>
<organism>
    <name type="scientific">Homo sapiens</name>
    <name type="common">Human</name>
    <dbReference type="NCBI Taxonomy" id="9606"/>
    <lineage>
        <taxon>Eukaryota</taxon>
        <taxon>Metazoa</taxon>
        <taxon>Chordata</taxon>
        <taxon>Craniata</taxon>
        <taxon>Vertebrata</taxon>
        <taxon>Euteleostomi</taxon>
        <taxon>Mammalia</taxon>
        <taxon>Eutheria</taxon>
        <taxon>Euarchontoglires</taxon>
        <taxon>Primates</taxon>
        <taxon>Haplorrhini</taxon>
        <taxon>Catarrhini</taxon>
        <taxon>Hominidae</taxon>
        <taxon>Homo</taxon>
    </lineage>
</organism>
<sequence length="126" mass="13904">MSVMDLANTCSSFQSDLDFCSDCGSVLPLPGAQDTVTCIRCGFNINVRDFEGKVVKTSVVFHQLGTAMPMSVEEGPECQGPVVDRRCPRCGHEGMAYHTRQMRSADEGQTVFYTCTNCKFQEKEDS</sequence>
<comment type="function">
    <text evidence="4 5 6">Core component of RNA polymerase I (Pol I), a DNA-dependent RNA polymerase which synthesizes ribosomal RNA precursors using the four ribonucleoside triphosphates as substrates. Can mediate Pol I proofreading of the nascent RNA transcript. Anchors into the Pol I active site to monitor transcription fidelity and cleave mis-incorporated 5'-ribonucleotides.</text>
</comment>
<comment type="subunit">
    <text evidence="4 5 6">Component of the RNA polymerase I (Pol I) complex consisting of 13 subunits: a ten-subunit catalytic core composed of POLR1A/RPA1, POLR1B/RPA2, POLR1C/RPAC1, POLR1D/RPAC2, POLR1H/RPA12, POLR2E/RPABC1, POLR2F/RPABC2, POLR2H/RPABC3, POLR2K/RPABC4 and POLR2L/RPABC5; a mobile stalk subunit POLR1F/RPA43 protruding from the core and additional subunits homologous to general transcription factors POLR1E/RPA49 and POLR1G/RPA34. Part of Pol I pre-initiation complex (PIC), in which Pol I core assembles with RRN3 and promoter-bound UTBF and SL1/TIF-IB complex.</text>
</comment>
<comment type="interaction">
    <interactant intactId="EBI-355434">
        <id>Q9P1U0</id>
    </interactant>
    <interactant intactId="EBI-930964">
        <id>P54253</id>
        <label>ATXN1</label>
    </interactant>
    <organismsDiffer>false</organismsDiffer>
    <experiments>3</experiments>
</comment>
<comment type="interaction">
    <interactant intactId="EBI-355434">
        <id>Q9P1U0</id>
    </interactant>
    <interactant intactId="EBI-351506">
        <id>P06396</id>
        <label>GSN</label>
    </interactant>
    <organismsDiffer>false</organismsDiffer>
    <experiments>3</experiments>
</comment>
<comment type="interaction">
    <interactant intactId="EBI-355434">
        <id>Q9P1U0</id>
    </interactant>
    <interactant intactId="EBI-11059915">
        <id>Q8N7C3</id>
        <label>TRIML2</label>
    </interactant>
    <organismsDiffer>false</organismsDiffer>
    <experiments>3</experiments>
</comment>
<comment type="interaction">
    <interactant intactId="EBI-355434">
        <id>Q9P1U0</id>
    </interactant>
    <interactant intactId="EBI-25900580">
        <id>Q9Y649</id>
    </interactant>
    <organismsDiffer>false</organismsDiffer>
    <experiments>3</experiments>
</comment>
<comment type="subcellular location">
    <subcellularLocation>
        <location evidence="10">Nucleus</location>
        <location evidence="10">Nucleolus</location>
    </subcellularLocation>
</comment>
<comment type="domain">
    <text evidence="1 4">The TFIIS-type zinc-binding beta-ribbon domain contains an acidic hairpin motif (residues Asp-106, Glu-107) that likely coordinates the nucleophilic water and magnesium to cleave the scissile phosphodiester bond and release the mis-incorporated 5'-ribonucleotides.</text>
</comment>
<comment type="similarity">
    <text evidence="9">Belongs to the archaeal RpoM/eukaryotic RPA12/RPB9/RPC11 RNA polymerase family.</text>
</comment>
<dbReference type="EMBL" id="AF024617">
    <property type="protein sequence ID" value="AAF40469.1"/>
    <property type="molecule type" value="mRNA"/>
</dbReference>
<dbReference type="EMBL" id="AF230337">
    <property type="protein sequence ID" value="AAG50159.1"/>
    <property type="molecule type" value="mRNA"/>
</dbReference>
<dbReference type="EMBL" id="AF230338">
    <property type="protein sequence ID" value="AAG50160.1"/>
    <property type="molecule type" value="Genomic_DNA"/>
</dbReference>
<dbReference type="EMBL" id="CR457109">
    <property type="protein sequence ID" value="CAG33390.1"/>
    <property type="molecule type" value="mRNA"/>
</dbReference>
<dbReference type="EMBL" id="AL669914">
    <property type="status" value="NOT_ANNOTATED_CDS"/>
    <property type="molecule type" value="Genomic_DNA"/>
</dbReference>
<dbReference type="EMBL" id="AL671859">
    <property type="status" value="NOT_ANNOTATED_CDS"/>
    <property type="molecule type" value="Genomic_DNA"/>
</dbReference>
<dbReference type="EMBL" id="AL845439">
    <property type="status" value="NOT_ANNOTATED_CDS"/>
    <property type="molecule type" value="Genomic_DNA"/>
</dbReference>
<dbReference type="EMBL" id="BX088647">
    <property type="status" value="NOT_ANNOTATED_CDS"/>
    <property type="molecule type" value="Genomic_DNA"/>
</dbReference>
<dbReference type="EMBL" id="BC010898">
    <property type="protein sequence ID" value="AAH10898.1"/>
    <property type="molecule type" value="mRNA"/>
</dbReference>
<dbReference type="EMBL" id="BC050608">
    <property type="protein sequence ID" value="AAH50608.1"/>
    <property type="molecule type" value="mRNA"/>
</dbReference>
<dbReference type="CCDS" id="CCDS4670.1"/>
<dbReference type="RefSeq" id="NP_001265714.1">
    <property type="nucleotide sequence ID" value="NM_001278785.2"/>
</dbReference>
<dbReference type="RefSeq" id="NP_001265715.1">
    <property type="nucleotide sequence ID" value="NM_001278786.2"/>
</dbReference>
<dbReference type="RefSeq" id="NP_055411.1">
    <property type="nucleotide sequence ID" value="NM_014596.6"/>
</dbReference>
<dbReference type="RefSeq" id="NP_740753.1">
    <property type="nucleotide sequence ID" value="NM_170783.4"/>
</dbReference>
<dbReference type="RefSeq" id="XP_047274651.1">
    <property type="nucleotide sequence ID" value="XM_047418695.1"/>
</dbReference>
<dbReference type="RefSeq" id="XP_054185774.1">
    <property type="nucleotide sequence ID" value="XM_054329799.1"/>
</dbReference>
<dbReference type="RefSeq" id="XP_054186262.1">
    <property type="nucleotide sequence ID" value="XM_054330287.1"/>
</dbReference>
<dbReference type="RefSeq" id="XP_054186553.1">
    <property type="nucleotide sequence ID" value="XM_054330578.1"/>
</dbReference>
<dbReference type="RefSeq" id="XP_054187294.1">
    <property type="nucleotide sequence ID" value="XM_054331319.1"/>
</dbReference>
<dbReference type="PDB" id="7OB9">
    <property type="method" value="EM"/>
    <property type="resolution" value="2.70 A"/>
    <property type="chains" value="I=1-126"/>
</dbReference>
<dbReference type="PDB" id="7OBA">
    <property type="method" value="EM"/>
    <property type="resolution" value="3.10 A"/>
    <property type="chains" value="I=1-126"/>
</dbReference>
<dbReference type="PDB" id="7OBB">
    <property type="method" value="EM"/>
    <property type="resolution" value="3.30 A"/>
    <property type="chains" value="I=1-126"/>
</dbReference>
<dbReference type="PDB" id="7VBA">
    <property type="method" value="EM"/>
    <property type="resolution" value="2.89 A"/>
    <property type="chains" value="I=1-126"/>
</dbReference>
<dbReference type="PDB" id="7VBB">
    <property type="method" value="EM"/>
    <property type="resolution" value="2.81 A"/>
    <property type="chains" value="I=1-126"/>
</dbReference>
<dbReference type="PDB" id="7VBC">
    <property type="method" value="EM"/>
    <property type="resolution" value="3.01 A"/>
    <property type="chains" value="I=1-126"/>
</dbReference>
<dbReference type="PDB" id="8A43">
    <property type="method" value="EM"/>
    <property type="resolution" value="4.09 A"/>
    <property type="chains" value="I=1-126"/>
</dbReference>
<dbReference type="PDBsum" id="7OB9"/>
<dbReference type="PDBsum" id="7OBA"/>
<dbReference type="PDBsum" id="7OBB"/>
<dbReference type="PDBsum" id="7VBA"/>
<dbReference type="PDBsum" id="7VBB"/>
<dbReference type="PDBsum" id="7VBC"/>
<dbReference type="PDBsum" id="8A43"/>
<dbReference type="EMDB" id="EMD-12795"/>
<dbReference type="EMDB" id="EMD-12796"/>
<dbReference type="EMDB" id="EMD-12797"/>
<dbReference type="EMDB" id="EMD-15135"/>
<dbReference type="EMDB" id="EMD-31876"/>
<dbReference type="EMDB" id="EMD-31877"/>
<dbReference type="EMDB" id="EMD-31878"/>
<dbReference type="SMR" id="Q9P1U0"/>
<dbReference type="BioGRID" id="119050">
    <property type="interactions" value="73"/>
</dbReference>
<dbReference type="ComplexPortal" id="CPX-2386">
    <property type="entry name" value="DNA-directed RNA polymerase I complex"/>
</dbReference>
<dbReference type="FunCoup" id="Q9P1U0">
    <property type="interactions" value="1815"/>
</dbReference>
<dbReference type="IntAct" id="Q9P1U0">
    <property type="interactions" value="33"/>
</dbReference>
<dbReference type="MINT" id="Q9P1U0"/>
<dbReference type="STRING" id="9606.ENSP00000331111"/>
<dbReference type="GlyGen" id="Q9P1U0">
    <property type="glycosylation" value="1 site, 1 O-linked glycan (1 site)"/>
</dbReference>
<dbReference type="BioMuta" id="ZNRD1"/>
<dbReference type="DMDM" id="71649339"/>
<dbReference type="jPOST" id="Q9P1U0"/>
<dbReference type="MassIVE" id="Q9P1U0"/>
<dbReference type="PaxDb" id="9606-ENSP00000331111"/>
<dbReference type="PeptideAtlas" id="Q9P1U0"/>
<dbReference type="ProteomicsDB" id="83665"/>
<dbReference type="Pumba" id="Q9P1U0"/>
<dbReference type="Antibodypedia" id="26188">
    <property type="antibodies" value="157 antibodies from 21 providers"/>
</dbReference>
<dbReference type="DNASU" id="30834"/>
<dbReference type="Ensembl" id="ENST00000332435.10">
    <property type="protein sequence ID" value="ENSP00000331111.5"/>
    <property type="gene ID" value="ENSG00000066379.15"/>
</dbReference>
<dbReference type="Ensembl" id="ENST00000359374.8">
    <property type="protein sequence ID" value="ENSP00000352333.4"/>
    <property type="gene ID" value="ENSG00000066379.15"/>
</dbReference>
<dbReference type="Ensembl" id="ENST00000376782.6">
    <property type="protein sequence ID" value="ENSP00000365978.2"/>
    <property type="gene ID" value="ENSG00000066379.15"/>
</dbReference>
<dbReference type="Ensembl" id="ENST00000376785.2">
    <property type="protein sequence ID" value="ENSP00000365981.2"/>
    <property type="gene ID" value="ENSG00000066379.15"/>
</dbReference>
<dbReference type="Ensembl" id="ENST00000383613.6">
    <property type="protein sequence ID" value="ENSP00000373108.2"/>
    <property type="gene ID" value="ENSG00000206502.8"/>
</dbReference>
<dbReference type="Ensembl" id="ENST00000400659.1">
    <property type="protein sequence ID" value="ENSP00000383500.1"/>
    <property type="gene ID" value="ENSG00000206502.8"/>
</dbReference>
<dbReference type="Ensembl" id="ENST00000400660.7">
    <property type="protein sequence ID" value="ENSP00000383501.3"/>
    <property type="gene ID" value="ENSG00000206502.8"/>
</dbReference>
<dbReference type="Ensembl" id="ENST00000400662.7">
    <property type="protein sequence ID" value="ENSP00000383503.3"/>
    <property type="gene ID" value="ENSG00000206502.8"/>
</dbReference>
<dbReference type="Ensembl" id="ENST00000412396.1">
    <property type="protein sequence ID" value="ENSP00000396922.1"/>
    <property type="gene ID" value="ENSG00000233795.6"/>
</dbReference>
<dbReference type="Ensembl" id="ENST00000417275.6">
    <property type="protein sequence ID" value="ENSP00000397636.2"/>
    <property type="gene ID" value="ENSG00000233795.6"/>
</dbReference>
<dbReference type="Ensembl" id="ENST00000417738.6">
    <property type="protein sequence ID" value="ENSP00000407715.2"/>
    <property type="gene ID" value="ENSG00000235176.6"/>
</dbReference>
<dbReference type="Ensembl" id="ENST00000420100.5">
    <property type="protein sequence ID" value="ENSP00000410530.1"/>
    <property type="gene ID" value="ENSG00000236808.6"/>
</dbReference>
<dbReference type="Ensembl" id="ENST00000428913.5">
    <property type="protein sequence ID" value="ENSP00000414110.1"/>
    <property type="gene ID" value="ENSG00000224859.6"/>
</dbReference>
<dbReference type="Ensembl" id="ENST00000429558.5">
    <property type="protein sequence ID" value="ENSP00000410954.1"/>
    <property type="gene ID" value="ENSG00000235176.6"/>
</dbReference>
<dbReference type="Ensembl" id="ENST00000431032.5">
    <property type="protein sequence ID" value="ENSP00000416599.1"/>
    <property type="gene ID" value="ENSG00000236949.6"/>
</dbReference>
<dbReference type="Ensembl" id="ENST00000431416.1">
    <property type="protein sequence ID" value="ENSP00000395065.1"/>
    <property type="gene ID" value="ENSG00000235176.6"/>
</dbReference>
<dbReference type="Ensembl" id="ENST00000432227.6">
    <property type="protein sequence ID" value="ENSP00000399302.2"/>
    <property type="gene ID" value="ENSG00000236808.6"/>
</dbReference>
<dbReference type="Ensembl" id="ENST00000432545.1">
    <property type="protein sequence ID" value="ENSP00000405264.1"/>
    <property type="gene ID" value="ENSG00000236949.6"/>
</dbReference>
<dbReference type="Ensembl" id="ENST00000432904.6">
    <property type="protein sequence ID" value="ENSP00000414720.2"/>
    <property type="gene ID" value="ENSG00000236808.6"/>
</dbReference>
<dbReference type="Ensembl" id="ENST00000433264.6">
    <property type="protein sequence ID" value="ENSP00000393236.2"/>
    <property type="gene ID" value="ENSG00000236949.6"/>
</dbReference>
<dbReference type="Ensembl" id="ENST00000437373.6">
    <property type="protein sequence ID" value="ENSP00000410127.2"/>
    <property type="gene ID" value="ENSG00000236949.6"/>
</dbReference>
<dbReference type="Ensembl" id="ENST00000437507.5">
    <property type="protein sequence ID" value="ENSP00000412369.1"/>
    <property type="gene ID" value="ENSG00000235443.6"/>
</dbReference>
<dbReference type="Ensembl" id="ENST00000441251.6">
    <property type="protein sequence ID" value="ENSP00000413265.2"/>
    <property type="gene ID" value="ENSG00000235176.6"/>
</dbReference>
<dbReference type="Ensembl" id="ENST00000442585.6">
    <property type="protein sequence ID" value="ENSP00000394779.2"/>
    <property type="gene ID" value="ENSG00000233795.6"/>
</dbReference>
<dbReference type="Ensembl" id="ENST00000443142.6">
    <property type="protein sequence ID" value="ENSP00000391809.2"/>
    <property type="gene ID" value="ENSG00000235443.6"/>
</dbReference>
<dbReference type="Ensembl" id="ENST00000443494.6">
    <property type="protein sequence ID" value="ENSP00000395397.2"/>
    <property type="gene ID" value="ENSG00000235443.6"/>
</dbReference>
<dbReference type="Ensembl" id="ENST00000444027.1">
    <property type="protein sequence ID" value="ENSP00000396661.1"/>
    <property type="gene ID" value="ENSG00000236808.6"/>
</dbReference>
<dbReference type="Ensembl" id="ENST00000444794.5">
    <property type="protein sequence ID" value="ENSP00000407364.1"/>
    <property type="gene ID" value="ENSG00000233795.6"/>
</dbReference>
<dbReference type="Ensembl" id="ENST00000446493.6">
    <property type="protein sequence ID" value="ENSP00000399966.2"/>
    <property type="gene ID" value="ENSG00000224859.6"/>
</dbReference>
<dbReference type="Ensembl" id="ENST00000451875.1">
    <property type="protein sequence ID" value="ENSP00000387914.1"/>
    <property type="gene ID" value="ENSG00000224859.6"/>
</dbReference>
<dbReference type="Ensembl" id="ENST00000453694.1">
    <property type="protein sequence ID" value="ENSP00000405636.1"/>
    <property type="gene ID" value="ENSG00000235443.6"/>
</dbReference>
<dbReference type="Ensembl" id="ENST00000455948.6">
    <property type="protein sequence ID" value="ENSP00000402198.2"/>
    <property type="gene ID" value="ENSG00000224859.6"/>
</dbReference>
<dbReference type="GeneID" id="30834"/>
<dbReference type="KEGG" id="hsa:30834"/>
<dbReference type="MANE-Select" id="ENST00000332435.10">
    <property type="protein sequence ID" value="ENSP00000331111.5"/>
    <property type="RefSeq nucleotide sequence ID" value="NM_170783.4"/>
    <property type="RefSeq protein sequence ID" value="NP_740753.1"/>
</dbReference>
<dbReference type="UCSC" id="uc003noz.5">
    <property type="organism name" value="human"/>
</dbReference>
<dbReference type="AGR" id="HGNC:13182"/>
<dbReference type="CTD" id="30834"/>
<dbReference type="DisGeNET" id="30834"/>
<dbReference type="GeneCards" id="POLR1H"/>
<dbReference type="HGNC" id="HGNC:13182">
    <property type="gene designation" value="POLR1H"/>
</dbReference>
<dbReference type="HPA" id="ENSG00000066379">
    <property type="expression patterns" value="Low tissue specificity"/>
</dbReference>
<dbReference type="MIM" id="607525">
    <property type="type" value="gene"/>
</dbReference>
<dbReference type="neXtProt" id="NX_Q9P1U0"/>
<dbReference type="OpenTargets" id="ENSG00000066379"/>
<dbReference type="PharmGKB" id="PA37754"/>
<dbReference type="VEuPathDB" id="HostDB:ENSG00000066379"/>
<dbReference type="eggNOG" id="KOG2907">
    <property type="taxonomic scope" value="Eukaryota"/>
</dbReference>
<dbReference type="GeneTree" id="ENSGT00390000008126"/>
<dbReference type="HOGENOM" id="CLU_093932_1_2_1"/>
<dbReference type="InParanoid" id="Q9P1U0"/>
<dbReference type="OMA" id="EMQYHTL"/>
<dbReference type="OrthoDB" id="10056816at2759"/>
<dbReference type="PAN-GO" id="Q9P1U0">
    <property type="GO annotations" value="3 GO annotations based on evolutionary models"/>
</dbReference>
<dbReference type="PhylomeDB" id="Q9P1U0"/>
<dbReference type="TreeFam" id="TF313881"/>
<dbReference type="PathwayCommons" id="Q9P1U0"/>
<dbReference type="Reactome" id="R-HSA-427413">
    <property type="pathway name" value="NoRC negatively regulates rRNA expression"/>
</dbReference>
<dbReference type="Reactome" id="R-HSA-5250924">
    <property type="pathway name" value="B-WICH complex positively regulates rRNA expression"/>
</dbReference>
<dbReference type="Reactome" id="R-HSA-73762">
    <property type="pathway name" value="RNA Polymerase I Transcription Initiation"/>
</dbReference>
<dbReference type="Reactome" id="R-HSA-73772">
    <property type="pathway name" value="RNA Polymerase I Promoter Escape"/>
</dbReference>
<dbReference type="Reactome" id="R-HSA-73863">
    <property type="pathway name" value="RNA Polymerase I Transcription Termination"/>
</dbReference>
<dbReference type="SignaLink" id="Q9P1U0"/>
<dbReference type="SIGNOR" id="Q9P1U0"/>
<dbReference type="BioGRID-ORCS" id="30834">
    <property type="hits" value="672 hits in 1165 CRISPR screens"/>
</dbReference>
<dbReference type="CD-CODE" id="91857CE7">
    <property type="entry name" value="Nucleolus"/>
</dbReference>
<dbReference type="ChiTaRS" id="ZNRD1">
    <property type="organism name" value="human"/>
</dbReference>
<dbReference type="GeneWiki" id="ZNRD1"/>
<dbReference type="GenomeRNAi" id="30834"/>
<dbReference type="Pharos" id="Q9P1U0">
    <property type="development level" value="Tbio"/>
</dbReference>
<dbReference type="PRO" id="PR:Q9P1U0"/>
<dbReference type="Proteomes" id="UP000005640">
    <property type="component" value="Chromosome 6"/>
</dbReference>
<dbReference type="RNAct" id="Q9P1U0">
    <property type="molecule type" value="protein"/>
</dbReference>
<dbReference type="Bgee" id="ENSG00000066379">
    <property type="expression patterns" value="Expressed in granulocyte and 99 other cell types or tissues"/>
</dbReference>
<dbReference type="ExpressionAtlas" id="Q9P1U0">
    <property type="expression patterns" value="baseline and differential"/>
</dbReference>
<dbReference type="GO" id="GO:0005654">
    <property type="term" value="C:nucleoplasm"/>
    <property type="evidence" value="ECO:0000304"/>
    <property type="project" value="Reactome"/>
</dbReference>
<dbReference type="GO" id="GO:0005736">
    <property type="term" value="C:RNA polymerase I complex"/>
    <property type="evidence" value="ECO:0000314"/>
    <property type="project" value="UniProtKB"/>
</dbReference>
<dbReference type="GO" id="GO:0003899">
    <property type="term" value="F:DNA-directed RNA polymerase activity"/>
    <property type="evidence" value="ECO:0007669"/>
    <property type="project" value="InterPro"/>
</dbReference>
<dbReference type="GO" id="GO:0003676">
    <property type="term" value="F:nucleic acid binding"/>
    <property type="evidence" value="ECO:0007669"/>
    <property type="project" value="InterPro"/>
</dbReference>
<dbReference type="GO" id="GO:0008270">
    <property type="term" value="F:zinc ion binding"/>
    <property type="evidence" value="ECO:0007669"/>
    <property type="project" value="UniProtKB-KW"/>
</dbReference>
<dbReference type="GO" id="GO:0006139">
    <property type="term" value="P:nucleobase-containing compound metabolic process"/>
    <property type="evidence" value="ECO:0000304"/>
    <property type="project" value="ProtInc"/>
</dbReference>
<dbReference type="GO" id="GO:0006363">
    <property type="term" value="P:termination of RNA polymerase I transcription"/>
    <property type="evidence" value="ECO:0000318"/>
    <property type="project" value="GO_Central"/>
</dbReference>
<dbReference type="CDD" id="cd10507">
    <property type="entry name" value="Zn-ribbon_RPA12"/>
    <property type="match status" value="1"/>
</dbReference>
<dbReference type="FunFam" id="2.20.25.10:FF:000020">
    <property type="entry name" value="DNA-directed RNA polymerase subunit"/>
    <property type="match status" value="1"/>
</dbReference>
<dbReference type="Gene3D" id="2.20.25.10">
    <property type="match status" value="1"/>
</dbReference>
<dbReference type="InterPro" id="IPR019761">
    <property type="entry name" value="DNA-dir_RNA_pol-M_15_CS"/>
</dbReference>
<dbReference type="InterPro" id="IPR012164">
    <property type="entry name" value="Rpa12/Rpb9/Rpc10/TFS"/>
</dbReference>
<dbReference type="InterPro" id="IPR034004">
    <property type="entry name" value="Zn_ribbon_RPA12_C"/>
</dbReference>
<dbReference type="InterPro" id="IPR001222">
    <property type="entry name" value="Znf_TFIIS"/>
</dbReference>
<dbReference type="PANTHER" id="PTHR11239">
    <property type="entry name" value="DNA-DIRECTED RNA POLYMERASE"/>
    <property type="match status" value="1"/>
</dbReference>
<dbReference type="PANTHER" id="PTHR11239:SF14">
    <property type="entry name" value="DNA-DIRECTED RNA POLYMERASE I SUBUNIT RPA12"/>
    <property type="match status" value="1"/>
</dbReference>
<dbReference type="Pfam" id="PF01096">
    <property type="entry name" value="Zn_ribbon_TFIIS"/>
    <property type="match status" value="1"/>
</dbReference>
<dbReference type="PIRSF" id="PIRSF005586">
    <property type="entry name" value="RNApol_RpoM"/>
    <property type="match status" value="1"/>
</dbReference>
<dbReference type="SMART" id="SM00440">
    <property type="entry name" value="ZnF_C2C2"/>
    <property type="match status" value="1"/>
</dbReference>
<dbReference type="SUPFAM" id="SSF57783">
    <property type="entry name" value="Zinc beta-ribbon"/>
    <property type="match status" value="1"/>
</dbReference>
<dbReference type="PROSITE" id="PS01030">
    <property type="entry name" value="RNA_POL_M_15KD"/>
    <property type="match status" value="1"/>
</dbReference>
<dbReference type="PROSITE" id="PS00466">
    <property type="entry name" value="ZF_TFIIS_1"/>
    <property type="match status" value="1"/>
</dbReference>
<dbReference type="PROSITE" id="PS51133">
    <property type="entry name" value="ZF_TFIIS_2"/>
    <property type="match status" value="1"/>
</dbReference>
<accession>Q9P1U0</accession>